<keyword id="KW-0963">Cytoplasm</keyword>
<keyword id="KW-0350">Heme biosynthesis</keyword>
<keyword id="KW-0408">Iron</keyword>
<keyword id="KW-0456">Lyase</keyword>
<keyword id="KW-0479">Metal-binding</keyword>
<keyword id="KW-0627">Porphyrin biosynthesis</keyword>
<protein>
    <recommendedName>
        <fullName evidence="1">Ferrochelatase</fullName>
        <ecNumber evidence="1">4.98.1.1</ecNumber>
    </recommendedName>
    <alternativeName>
        <fullName evidence="1">Heme synthase</fullName>
    </alternativeName>
    <alternativeName>
        <fullName evidence="1">Protoheme ferro-lyase</fullName>
    </alternativeName>
</protein>
<proteinExistence type="inferred from homology"/>
<sequence length="354" mass="39180">MRFDLEPPSSVAAAHRIGVLLINLGTPDAPTPRAVRRYLAEFLSDPRVVEIPQAIWQVLLRTVILPLRGRASAKKYAAVWMPEGSPLRVYTERQTEGVRHLLAANDYQVQVDYAMRYGSPNIAQALAQFKRAGVERVLLMPMYPQYSASTTATAFDAAFAALTRMRNQPEVRTVRHYADHPAYIHALAEQVRHYWAQHGRPDFAAGDKLVLSFHGVPKRTLDLGDPYHDQCQQTGALLMAALGLSTLECRVTFQSRFGKAEWLQPYTAPTLRELGEAGVRRADVFCPGFTADCLETIEEIGMEVRDEFLAGGGQAFHRIPCLNGASAWIGALGEIVAENLQGWPAKAAQPETVS</sequence>
<name>HEMH_BURVG</name>
<feature type="chain" id="PRO_1000019286" description="Ferrochelatase">
    <location>
        <begin position="1"/>
        <end position="354"/>
    </location>
</feature>
<feature type="binding site" evidence="1">
    <location>
        <position position="214"/>
    </location>
    <ligand>
        <name>Fe cation</name>
        <dbReference type="ChEBI" id="CHEBI:24875"/>
    </ligand>
</feature>
<feature type="binding site" evidence="1">
    <location>
        <position position="295"/>
    </location>
    <ligand>
        <name>Fe cation</name>
        <dbReference type="ChEBI" id="CHEBI:24875"/>
    </ligand>
</feature>
<accession>A4JBR6</accession>
<gene>
    <name evidence="1" type="primary">hemH</name>
    <name type="ordered locus">Bcep1808_0707</name>
</gene>
<comment type="function">
    <text evidence="1">Catalyzes the ferrous insertion into protoporphyrin IX.</text>
</comment>
<comment type="catalytic activity">
    <reaction evidence="1">
        <text>heme b + 2 H(+) = protoporphyrin IX + Fe(2+)</text>
        <dbReference type="Rhea" id="RHEA:22584"/>
        <dbReference type="ChEBI" id="CHEBI:15378"/>
        <dbReference type="ChEBI" id="CHEBI:29033"/>
        <dbReference type="ChEBI" id="CHEBI:57306"/>
        <dbReference type="ChEBI" id="CHEBI:60344"/>
        <dbReference type="EC" id="4.98.1.1"/>
    </reaction>
</comment>
<comment type="pathway">
    <text evidence="1">Porphyrin-containing compound metabolism; protoheme biosynthesis; protoheme from protoporphyrin-IX: step 1/1.</text>
</comment>
<comment type="subcellular location">
    <subcellularLocation>
        <location evidence="1">Cytoplasm</location>
    </subcellularLocation>
</comment>
<comment type="similarity">
    <text evidence="1">Belongs to the ferrochelatase family.</text>
</comment>
<reference key="1">
    <citation type="submission" date="2007-03" db="EMBL/GenBank/DDBJ databases">
        <title>Complete sequence of chromosome 1 of Burkholderia vietnamiensis G4.</title>
        <authorList>
            <consortium name="US DOE Joint Genome Institute"/>
            <person name="Copeland A."/>
            <person name="Lucas S."/>
            <person name="Lapidus A."/>
            <person name="Barry K."/>
            <person name="Detter J.C."/>
            <person name="Glavina del Rio T."/>
            <person name="Hammon N."/>
            <person name="Israni S."/>
            <person name="Dalin E."/>
            <person name="Tice H."/>
            <person name="Pitluck S."/>
            <person name="Chain P."/>
            <person name="Malfatti S."/>
            <person name="Shin M."/>
            <person name="Vergez L."/>
            <person name="Schmutz J."/>
            <person name="Larimer F."/>
            <person name="Land M."/>
            <person name="Hauser L."/>
            <person name="Kyrpides N."/>
            <person name="Tiedje J."/>
            <person name="Richardson P."/>
        </authorList>
    </citation>
    <scope>NUCLEOTIDE SEQUENCE [LARGE SCALE GENOMIC DNA]</scope>
    <source>
        <strain>G4 / LMG 22486</strain>
    </source>
</reference>
<organism>
    <name type="scientific">Burkholderia vietnamiensis (strain G4 / LMG 22486)</name>
    <name type="common">Burkholderia cepacia (strain R1808)</name>
    <dbReference type="NCBI Taxonomy" id="269482"/>
    <lineage>
        <taxon>Bacteria</taxon>
        <taxon>Pseudomonadati</taxon>
        <taxon>Pseudomonadota</taxon>
        <taxon>Betaproteobacteria</taxon>
        <taxon>Burkholderiales</taxon>
        <taxon>Burkholderiaceae</taxon>
        <taxon>Burkholderia</taxon>
        <taxon>Burkholderia cepacia complex</taxon>
    </lineage>
</organism>
<dbReference type="EC" id="4.98.1.1" evidence="1"/>
<dbReference type="EMBL" id="CP000614">
    <property type="protein sequence ID" value="ABO53719.1"/>
    <property type="molecule type" value="Genomic_DNA"/>
</dbReference>
<dbReference type="SMR" id="A4JBR6"/>
<dbReference type="KEGG" id="bvi:Bcep1808_0707"/>
<dbReference type="eggNOG" id="COG0276">
    <property type="taxonomic scope" value="Bacteria"/>
</dbReference>
<dbReference type="HOGENOM" id="CLU_018884_0_0_4"/>
<dbReference type="UniPathway" id="UPA00252">
    <property type="reaction ID" value="UER00325"/>
</dbReference>
<dbReference type="Proteomes" id="UP000002287">
    <property type="component" value="Chromosome 1"/>
</dbReference>
<dbReference type="GO" id="GO:0005737">
    <property type="term" value="C:cytoplasm"/>
    <property type="evidence" value="ECO:0007669"/>
    <property type="project" value="UniProtKB-SubCell"/>
</dbReference>
<dbReference type="GO" id="GO:0004325">
    <property type="term" value="F:ferrochelatase activity"/>
    <property type="evidence" value="ECO:0007669"/>
    <property type="project" value="UniProtKB-UniRule"/>
</dbReference>
<dbReference type="GO" id="GO:0046872">
    <property type="term" value="F:metal ion binding"/>
    <property type="evidence" value="ECO:0007669"/>
    <property type="project" value="UniProtKB-KW"/>
</dbReference>
<dbReference type="GO" id="GO:0006783">
    <property type="term" value="P:heme biosynthetic process"/>
    <property type="evidence" value="ECO:0007669"/>
    <property type="project" value="UniProtKB-UniRule"/>
</dbReference>
<dbReference type="CDD" id="cd00419">
    <property type="entry name" value="Ferrochelatase_C"/>
    <property type="match status" value="1"/>
</dbReference>
<dbReference type="CDD" id="cd03411">
    <property type="entry name" value="Ferrochelatase_N"/>
    <property type="match status" value="1"/>
</dbReference>
<dbReference type="FunFam" id="3.40.50.1400:FF:000002">
    <property type="entry name" value="Ferrochelatase"/>
    <property type="match status" value="1"/>
</dbReference>
<dbReference type="Gene3D" id="3.40.50.1400">
    <property type="match status" value="2"/>
</dbReference>
<dbReference type="HAMAP" id="MF_00323">
    <property type="entry name" value="Ferrochelatase"/>
    <property type="match status" value="1"/>
</dbReference>
<dbReference type="InterPro" id="IPR001015">
    <property type="entry name" value="Ferrochelatase"/>
</dbReference>
<dbReference type="InterPro" id="IPR019772">
    <property type="entry name" value="Ferrochelatase_AS"/>
</dbReference>
<dbReference type="InterPro" id="IPR033644">
    <property type="entry name" value="Ferrochelatase_C"/>
</dbReference>
<dbReference type="InterPro" id="IPR033659">
    <property type="entry name" value="Ferrochelatase_N"/>
</dbReference>
<dbReference type="NCBIfam" id="TIGR00109">
    <property type="entry name" value="hemH"/>
    <property type="match status" value="1"/>
</dbReference>
<dbReference type="PANTHER" id="PTHR11108">
    <property type="entry name" value="FERROCHELATASE"/>
    <property type="match status" value="1"/>
</dbReference>
<dbReference type="PANTHER" id="PTHR11108:SF1">
    <property type="entry name" value="FERROCHELATASE, MITOCHONDRIAL"/>
    <property type="match status" value="1"/>
</dbReference>
<dbReference type="Pfam" id="PF00762">
    <property type="entry name" value="Ferrochelatase"/>
    <property type="match status" value="1"/>
</dbReference>
<dbReference type="SUPFAM" id="SSF53800">
    <property type="entry name" value="Chelatase"/>
    <property type="match status" value="1"/>
</dbReference>
<dbReference type="PROSITE" id="PS00534">
    <property type="entry name" value="FERROCHELATASE"/>
    <property type="match status" value="1"/>
</dbReference>
<evidence type="ECO:0000255" key="1">
    <source>
        <dbReference type="HAMAP-Rule" id="MF_00323"/>
    </source>
</evidence>